<keyword id="KW-0067">ATP-binding</keyword>
<keyword id="KW-0418">Kinase</keyword>
<keyword id="KW-0547">Nucleotide-binding</keyword>
<keyword id="KW-1185">Reference proteome</keyword>
<keyword id="KW-0808">Transferase</keyword>
<protein>
    <recommendedName>
        <fullName evidence="1">Thiamine kinase</fullName>
        <ecNumber evidence="1">2.7.1.89</ecNumber>
    </recommendedName>
</protein>
<organism>
    <name type="scientific">Shigella sonnei (strain Ss046)</name>
    <dbReference type="NCBI Taxonomy" id="300269"/>
    <lineage>
        <taxon>Bacteria</taxon>
        <taxon>Pseudomonadati</taxon>
        <taxon>Pseudomonadota</taxon>
        <taxon>Gammaproteobacteria</taxon>
        <taxon>Enterobacterales</taxon>
        <taxon>Enterobacteriaceae</taxon>
        <taxon>Shigella</taxon>
    </lineage>
</organism>
<dbReference type="EC" id="2.7.1.89" evidence="1"/>
<dbReference type="EMBL" id="CP000038">
    <property type="protein sequence ID" value="AAZ87851.1"/>
    <property type="molecule type" value="Genomic_DNA"/>
</dbReference>
<dbReference type="RefSeq" id="WP_001116578.1">
    <property type="nucleotide sequence ID" value="NC_007384.1"/>
</dbReference>
<dbReference type="SMR" id="Q3Z311"/>
<dbReference type="GeneID" id="93776302"/>
<dbReference type="KEGG" id="ssn:SSON_1126"/>
<dbReference type="HOGENOM" id="CLU_055115_2_1_6"/>
<dbReference type="UniPathway" id="UPA00060">
    <property type="reaction ID" value="UER00596"/>
</dbReference>
<dbReference type="Proteomes" id="UP000002529">
    <property type="component" value="Chromosome"/>
</dbReference>
<dbReference type="GO" id="GO:0005524">
    <property type="term" value="F:ATP binding"/>
    <property type="evidence" value="ECO:0007669"/>
    <property type="project" value="UniProtKB-KW"/>
</dbReference>
<dbReference type="GO" id="GO:0019165">
    <property type="term" value="F:thiamine kinase activity"/>
    <property type="evidence" value="ECO:0007669"/>
    <property type="project" value="UniProtKB-UniRule"/>
</dbReference>
<dbReference type="GO" id="GO:0009229">
    <property type="term" value="P:thiamine diphosphate biosynthetic process"/>
    <property type="evidence" value="ECO:0007669"/>
    <property type="project" value="UniProtKB-UniRule"/>
</dbReference>
<dbReference type="GO" id="GO:0006772">
    <property type="term" value="P:thiamine metabolic process"/>
    <property type="evidence" value="ECO:0007669"/>
    <property type="project" value="InterPro"/>
</dbReference>
<dbReference type="FunFam" id="3.90.1200.10:FF:000004">
    <property type="entry name" value="Thiamine kinase"/>
    <property type="match status" value="1"/>
</dbReference>
<dbReference type="Gene3D" id="3.90.1200.10">
    <property type="match status" value="1"/>
</dbReference>
<dbReference type="HAMAP" id="MF_01604">
    <property type="entry name" value="Thiamine_kinase"/>
    <property type="match status" value="1"/>
</dbReference>
<dbReference type="InterPro" id="IPR002575">
    <property type="entry name" value="Aminoglycoside_PTrfase"/>
</dbReference>
<dbReference type="InterPro" id="IPR011009">
    <property type="entry name" value="Kinase-like_dom_sf"/>
</dbReference>
<dbReference type="InterPro" id="IPR014093">
    <property type="entry name" value="Thiamine_kinase"/>
</dbReference>
<dbReference type="NCBIfam" id="NF007620">
    <property type="entry name" value="PRK10271.1"/>
    <property type="match status" value="1"/>
</dbReference>
<dbReference type="NCBIfam" id="TIGR02721">
    <property type="entry name" value="ycfN_thiK"/>
    <property type="match status" value="1"/>
</dbReference>
<dbReference type="Pfam" id="PF01636">
    <property type="entry name" value="APH"/>
    <property type="match status" value="1"/>
</dbReference>
<dbReference type="SUPFAM" id="SSF56112">
    <property type="entry name" value="Protein kinase-like (PK-like)"/>
    <property type="match status" value="1"/>
</dbReference>
<reference key="1">
    <citation type="journal article" date="2005" name="Nucleic Acids Res.">
        <title>Genome dynamics and diversity of Shigella species, the etiologic agents of bacillary dysentery.</title>
        <authorList>
            <person name="Yang F."/>
            <person name="Yang J."/>
            <person name="Zhang X."/>
            <person name="Chen L."/>
            <person name="Jiang Y."/>
            <person name="Yan Y."/>
            <person name="Tang X."/>
            <person name="Wang J."/>
            <person name="Xiong Z."/>
            <person name="Dong J."/>
            <person name="Xue Y."/>
            <person name="Zhu Y."/>
            <person name="Xu X."/>
            <person name="Sun L."/>
            <person name="Chen S."/>
            <person name="Nie H."/>
            <person name="Peng J."/>
            <person name="Xu J."/>
            <person name="Wang Y."/>
            <person name="Yuan Z."/>
            <person name="Wen Y."/>
            <person name="Yao Z."/>
            <person name="Shen Y."/>
            <person name="Qiang B."/>
            <person name="Hou Y."/>
            <person name="Yu J."/>
            <person name="Jin Q."/>
        </authorList>
    </citation>
    <scope>NUCLEOTIDE SEQUENCE [LARGE SCALE GENOMIC DNA]</scope>
    <source>
        <strain>Ss046</strain>
    </source>
</reference>
<name>THIK_SHISS</name>
<feature type="chain" id="PRO_0000291002" description="Thiamine kinase">
    <location>
        <begin position="1"/>
        <end position="274"/>
    </location>
</feature>
<comment type="function">
    <text evidence="1">Catalyzes the ATP-dependent phosphorylation of thiamine to thiamine phosphate. Is involved in thiamine salvage.</text>
</comment>
<comment type="catalytic activity">
    <reaction evidence="1">
        <text>thiamine + ATP = thiamine phosphate + ADP + H(+)</text>
        <dbReference type="Rhea" id="RHEA:12012"/>
        <dbReference type="ChEBI" id="CHEBI:15378"/>
        <dbReference type="ChEBI" id="CHEBI:18385"/>
        <dbReference type="ChEBI" id="CHEBI:30616"/>
        <dbReference type="ChEBI" id="CHEBI:37575"/>
        <dbReference type="ChEBI" id="CHEBI:456216"/>
        <dbReference type="EC" id="2.7.1.89"/>
    </reaction>
    <physiologicalReaction direction="left-to-right" evidence="1">
        <dbReference type="Rhea" id="RHEA:12013"/>
    </physiologicalReaction>
</comment>
<comment type="pathway">
    <text evidence="1">Cofactor biosynthesis; thiamine diphosphate biosynthesis; thiamine phosphate from thiamine: step 1/1.</text>
</comment>
<comment type="similarity">
    <text evidence="1">Belongs to the thiamine kinase family.</text>
</comment>
<evidence type="ECO:0000255" key="1">
    <source>
        <dbReference type="HAMAP-Rule" id="MF_01604"/>
    </source>
</evidence>
<gene>
    <name evidence="1" type="primary">thiK</name>
    <name type="ordered locus">SSON_1126</name>
</gene>
<sequence>MPFRSNNPITRDELLSRFFPQFHPVTTFNSGLSGGSFLIEHQGQRFVVRQPHDPDAPQSAFLRQYRALSQLPASIAPKPHLYLRDWMVVDYLPGAVKTYLPDTNELAGLLYYLHQQPRFGWRITLLPLLELYWQQSDPARRTVGWLRMLKRLRKAREPRPLRLSPLHMDVHAGNLVHSASGLKLIDWEYAGDGDIALELAAVWVENTEQHRQLVNDYATRAKIYPAQLWRQVRRWFPWLLMLKAGWFEYRWRQIGDQQFIRLADDTWRQLLIKQ</sequence>
<proteinExistence type="inferred from homology"/>
<accession>Q3Z311</accession>